<dbReference type="EMBL" id="CP001083">
    <property type="protein sequence ID" value="ACQ51908.1"/>
    <property type="molecule type" value="Genomic_DNA"/>
</dbReference>
<dbReference type="RefSeq" id="WP_003357444.1">
    <property type="nucleotide sequence ID" value="NC_012658.1"/>
</dbReference>
<dbReference type="SMR" id="C3KVP9"/>
<dbReference type="GeneID" id="92940248"/>
<dbReference type="KEGG" id="cbi:CLJ_B3787"/>
<dbReference type="HOGENOM" id="CLU_037562_3_2_9"/>
<dbReference type="Proteomes" id="UP000002333">
    <property type="component" value="Chromosome"/>
</dbReference>
<dbReference type="GO" id="GO:1990904">
    <property type="term" value="C:ribonucleoprotein complex"/>
    <property type="evidence" value="ECO:0007669"/>
    <property type="project" value="UniProtKB-KW"/>
</dbReference>
<dbReference type="GO" id="GO:0005840">
    <property type="term" value="C:ribosome"/>
    <property type="evidence" value="ECO:0007669"/>
    <property type="project" value="UniProtKB-KW"/>
</dbReference>
<dbReference type="GO" id="GO:0019843">
    <property type="term" value="F:rRNA binding"/>
    <property type="evidence" value="ECO:0007669"/>
    <property type="project" value="UniProtKB-UniRule"/>
</dbReference>
<dbReference type="GO" id="GO:0003735">
    <property type="term" value="F:structural constituent of ribosome"/>
    <property type="evidence" value="ECO:0007669"/>
    <property type="project" value="InterPro"/>
</dbReference>
<dbReference type="GO" id="GO:0006412">
    <property type="term" value="P:translation"/>
    <property type="evidence" value="ECO:0007669"/>
    <property type="project" value="UniProtKB-UniRule"/>
</dbReference>
<dbReference type="FunFam" id="3.30.70.330:FF:000001">
    <property type="entry name" value="50S ribosomal protein L23"/>
    <property type="match status" value="1"/>
</dbReference>
<dbReference type="Gene3D" id="3.30.70.330">
    <property type="match status" value="1"/>
</dbReference>
<dbReference type="HAMAP" id="MF_01369_B">
    <property type="entry name" value="Ribosomal_uL23_B"/>
    <property type="match status" value="1"/>
</dbReference>
<dbReference type="InterPro" id="IPR012677">
    <property type="entry name" value="Nucleotide-bd_a/b_plait_sf"/>
</dbReference>
<dbReference type="InterPro" id="IPR013025">
    <property type="entry name" value="Ribosomal_uL23-like"/>
</dbReference>
<dbReference type="InterPro" id="IPR012678">
    <property type="entry name" value="Ribosomal_uL23/eL15/eS24_sf"/>
</dbReference>
<dbReference type="InterPro" id="IPR001014">
    <property type="entry name" value="Ribosomal_uL23_CS"/>
</dbReference>
<dbReference type="NCBIfam" id="NF004363">
    <property type="entry name" value="PRK05738.2-4"/>
    <property type="match status" value="1"/>
</dbReference>
<dbReference type="PANTHER" id="PTHR11620">
    <property type="entry name" value="60S RIBOSOMAL PROTEIN L23A"/>
    <property type="match status" value="1"/>
</dbReference>
<dbReference type="Pfam" id="PF00276">
    <property type="entry name" value="Ribosomal_L23"/>
    <property type="match status" value="1"/>
</dbReference>
<dbReference type="SUPFAM" id="SSF54189">
    <property type="entry name" value="Ribosomal proteins S24e, L23 and L15e"/>
    <property type="match status" value="1"/>
</dbReference>
<dbReference type="PROSITE" id="PS00050">
    <property type="entry name" value="RIBOSOMAL_L23"/>
    <property type="match status" value="1"/>
</dbReference>
<name>RL23_CLOB6</name>
<evidence type="ECO:0000255" key="1">
    <source>
        <dbReference type="HAMAP-Rule" id="MF_01369"/>
    </source>
</evidence>
<evidence type="ECO:0000305" key="2"/>
<gene>
    <name evidence="1" type="primary">rplW</name>
    <name type="ordered locus">CLJ_B3787</name>
</gene>
<protein>
    <recommendedName>
        <fullName evidence="1">Large ribosomal subunit protein uL23</fullName>
    </recommendedName>
    <alternativeName>
        <fullName evidence="2">50S ribosomal protein L23</fullName>
    </alternativeName>
</protein>
<organism>
    <name type="scientific">Clostridium botulinum (strain 657 / Type Ba4)</name>
    <dbReference type="NCBI Taxonomy" id="515621"/>
    <lineage>
        <taxon>Bacteria</taxon>
        <taxon>Bacillati</taxon>
        <taxon>Bacillota</taxon>
        <taxon>Clostridia</taxon>
        <taxon>Eubacteriales</taxon>
        <taxon>Clostridiaceae</taxon>
        <taxon>Clostridium</taxon>
    </lineage>
</organism>
<sequence length="97" mass="11160">MKLTNYDIIRRPLITEKTMASMADKKYTFVVDIHANKSQIKNAIETIFDVKVEDVKTARIMGKTKRVGVHIGKRPDYKKAIVKLTEDSKTIEFFEGL</sequence>
<accession>C3KVP9</accession>
<proteinExistence type="inferred from homology"/>
<comment type="function">
    <text evidence="1">One of the early assembly proteins it binds 23S rRNA. One of the proteins that surrounds the polypeptide exit tunnel on the outside of the ribosome. Forms the main docking site for trigger factor binding to the ribosome.</text>
</comment>
<comment type="subunit">
    <text evidence="1">Part of the 50S ribosomal subunit. Contacts protein L29, and trigger factor when it is bound to the ribosome.</text>
</comment>
<comment type="similarity">
    <text evidence="1">Belongs to the universal ribosomal protein uL23 family.</text>
</comment>
<keyword id="KW-0687">Ribonucleoprotein</keyword>
<keyword id="KW-0689">Ribosomal protein</keyword>
<keyword id="KW-0694">RNA-binding</keyword>
<keyword id="KW-0699">rRNA-binding</keyword>
<feature type="chain" id="PRO_1000215026" description="Large ribosomal subunit protein uL23">
    <location>
        <begin position="1"/>
        <end position="97"/>
    </location>
</feature>
<reference key="1">
    <citation type="submission" date="2008-05" db="EMBL/GenBank/DDBJ databases">
        <title>Genome sequence of Clostridium botulinum Ba4 strain 657.</title>
        <authorList>
            <person name="Shrivastava S."/>
            <person name="Brown J.L."/>
            <person name="Bruce D."/>
            <person name="Detter C."/>
            <person name="Munk C."/>
            <person name="Smith L.A."/>
            <person name="Smith T.J."/>
            <person name="Sutton G."/>
            <person name="Brettin T.S."/>
        </authorList>
    </citation>
    <scope>NUCLEOTIDE SEQUENCE [LARGE SCALE GENOMIC DNA]</scope>
    <source>
        <strain>657 / Type Ba4</strain>
    </source>
</reference>